<feature type="signal peptide">
    <location>
        <begin position="1"/>
        <end position="30"/>
    </location>
</feature>
<feature type="chain" id="PRO_0000006594" description="Nine-heme cytochrome c">
    <location>
        <begin position="31"/>
        <end position="326"/>
    </location>
</feature>
<feature type="binding site" description="axial binding residue">
    <location>
        <position position="67"/>
    </location>
    <ligand>
        <name>heme</name>
        <dbReference type="ChEBI" id="CHEBI:30413"/>
        <label>1</label>
    </ligand>
    <ligandPart>
        <name>Fe</name>
        <dbReference type="ChEBI" id="CHEBI:18248"/>
    </ligandPart>
</feature>
<feature type="binding site" description="axial binding residue">
    <location>
        <position position="70"/>
    </location>
    <ligand>
        <name>heme</name>
        <dbReference type="ChEBI" id="CHEBI:30413"/>
        <label>3</label>
    </ligand>
    <ligandPart>
        <name>Fe</name>
        <dbReference type="ChEBI" id="CHEBI:18248"/>
    </ligandPart>
</feature>
<feature type="binding site" description="covalent">
    <location>
        <position position="77"/>
    </location>
    <ligand>
        <name>heme</name>
        <dbReference type="ChEBI" id="CHEBI:30413"/>
        <label>1</label>
    </ligand>
</feature>
<feature type="binding site" description="covalent">
    <location>
        <position position="80"/>
    </location>
    <ligand>
        <name>heme</name>
        <dbReference type="ChEBI" id="CHEBI:30413"/>
        <label>1</label>
    </ligand>
</feature>
<feature type="binding site" description="axial binding residue">
    <location>
        <position position="81"/>
    </location>
    <ligand>
        <name>heme</name>
        <dbReference type="ChEBI" id="CHEBI:30413"/>
        <label>1</label>
    </ligand>
    <ligandPart>
        <name>Fe</name>
        <dbReference type="ChEBI" id="CHEBI:18248"/>
    </ligandPart>
</feature>
<feature type="binding site" description="axial binding residue">
    <location>
        <position position="82"/>
    </location>
    <ligand>
        <name>heme</name>
        <dbReference type="ChEBI" id="CHEBI:30413"/>
        <label>2</label>
    </ligand>
    <ligandPart>
        <name>Fe</name>
        <dbReference type="ChEBI" id="CHEBI:18248"/>
    </ligandPart>
</feature>
<feature type="binding site" description="covalent">
    <location>
        <position position="89"/>
    </location>
    <ligand>
        <name>heme</name>
        <dbReference type="ChEBI" id="CHEBI:30413"/>
        <label>2</label>
    </ligand>
</feature>
<feature type="binding site" description="covalent">
    <location>
        <position position="92"/>
    </location>
    <ligand>
        <name>heme</name>
        <dbReference type="ChEBI" id="CHEBI:30413"/>
        <label>2</label>
    </ligand>
</feature>
<feature type="binding site" description="axial binding residue">
    <location>
        <position position="93"/>
    </location>
    <ligand>
        <name>heme</name>
        <dbReference type="ChEBI" id="CHEBI:30413"/>
        <label>2</label>
    </ligand>
    <ligandPart>
        <name>Fe</name>
        <dbReference type="ChEBI" id="CHEBI:18248"/>
    </ligandPart>
</feature>
<feature type="binding site" description="axial binding residue">
    <location>
        <position position="111"/>
    </location>
    <ligand>
        <name>heme</name>
        <dbReference type="ChEBI" id="CHEBI:30413"/>
        <label>5</label>
    </ligand>
    <ligandPart>
        <name>Fe</name>
        <dbReference type="ChEBI" id="CHEBI:18248"/>
    </ligandPart>
</feature>
<feature type="binding site" description="covalent">
    <location>
        <position position="127"/>
    </location>
    <ligand>
        <name>heme</name>
        <dbReference type="ChEBI" id="CHEBI:30413"/>
        <label>3</label>
    </ligand>
</feature>
<feature type="binding site" description="covalent">
    <location>
        <position position="130"/>
    </location>
    <ligand>
        <name>heme</name>
        <dbReference type="ChEBI" id="CHEBI:30413"/>
        <label>3</label>
    </ligand>
</feature>
<feature type="binding site" description="axial binding residue">
    <location>
        <position position="131"/>
    </location>
    <ligand>
        <name>heme</name>
        <dbReference type="ChEBI" id="CHEBI:30413"/>
        <label>3</label>
    </ligand>
    <ligandPart>
        <name>Fe</name>
        <dbReference type="ChEBI" id="CHEBI:18248"/>
    </ligandPart>
</feature>
<feature type="binding site" description="covalent">
    <location>
        <position position="141"/>
    </location>
    <ligand>
        <name>heme</name>
        <dbReference type="ChEBI" id="CHEBI:30413"/>
        <label>4</label>
    </ligand>
</feature>
<feature type="binding site" description="covalent">
    <location>
        <position position="144"/>
    </location>
    <ligand>
        <name>heme</name>
        <dbReference type="ChEBI" id="CHEBI:30413"/>
        <label>4</label>
    </ligand>
</feature>
<feature type="binding site" description="axial binding residue">
    <location>
        <position position="145"/>
    </location>
    <ligand>
        <name>heme</name>
        <dbReference type="ChEBI" id="CHEBI:30413"/>
        <label>4</label>
    </ligand>
    <ligandPart>
        <name>Fe</name>
        <dbReference type="ChEBI" id="CHEBI:18248"/>
    </ligandPart>
</feature>
<feature type="binding site" description="covalent">
    <location>
        <position position="157"/>
    </location>
    <ligand>
        <name>heme</name>
        <dbReference type="ChEBI" id="CHEBI:30413"/>
        <label>5</label>
    </ligand>
</feature>
<feature type="binding site" description="covalent">
    <location>
        <position position="160"/>
    </location>
    <ligand>
        <name>heme</name>
        <dbReference type="ChEBI" id="CHEBI:30413"/>
        <label>5</label>
    </ligand>
</feature>
<feature type="binding site" description="axial binding residue">
    <location>
        <position position="161"/>
    </location>
    <ligand>
        <name>heme</name>
        <dbReference type="ChEBI" id="CHEBI:30413"/>
        <label>5</label>
    </ligand>
    <ligandPart>
        <name>Fe</name>
        <dbReference type="ChEBI" id="CHEBI:18248"/>
    </ligandPart>
</feature>
<feature type="binding site" description="axial binding residue">
    <location>
        <position position="227"/>
    </location>
    <ligand>
        <name>heme</name>
        <dbReference type="ChEBI" id="CHEBI:30413"/>
        <label>6</label>
    </ligand>
    <ligandPart>
        <name>Fe</name>
        <dbReference type="ChEBI" id="CHEBI:18248"/>
    </ligandPart>
</feature>
<feature type="binding site" description="axial binding residue">
    <location>
        <position position="230"/>
    </location>
    <ligand>
        <name>heme</name>
        <dbReference type="ChEBI" id="CHEBI:30413"/>
        <label>8</label>
    </ligand>
    <ligandPart>
        <name>Fe</name>
        <dbReference type="ChEBI" id="CHEBI:18248"/>
    </ligandPart>
</feature>
<feature type="binding site" description="axial binding residue">
    <location>
        <position position="248"/>
    </location>
    <ligand>
        <name>heme</name>
        <dbReference type="ChEBI" id="CHEBI:30413"/>
        <label>4</label>
    </ligand>
    <ligandPart>
        <name>Fe</name>
        <dbReference type="ChEBI" id="CHEBI:18248"/>
    </ligandPart>
</feature>
<feature type="binding site" description="covalent">
    <location>
        <position position="255"/>
    </location>
    <ligand>
        <name>heme</name>
        <dbReference type="ChEBI" id="CHEBI:30413"/>
        <label>6</label>
    </ligand>
</feature>
<feature type="binding site" description="covalent">
    <location>
        <position position="258"/>
    </location>
    <ligand>
        <name>heme</name>
        <dbReference type="ChEBI" id="CHEBI:30413"/>
        <label>6</label>
    </ligand>
</feature>
<feature type="binding site" description="axial binding residue">
    <location>
        <position position="259"/>
    </location>
    <ligand>
        <name>heme</name>
        <dbReference type="ChEBI" id="CHEBI:30413"/>
        <label>6</label>
    </ligand>
    <ligandPart>
        <name>Fe</name>
        <dbReference type="ChEBI" id="CHEBI:18248"/>
    </ligandPart>
</feature>
<feature type="binding site" description="axial binding residue">
    <location>
        <position position="260"/>
    </location>
    <ligand>
        <name>heme</name>
        <dbReference type="ChEBI" id="CHEBI:30413"/>
        <label>7</label>
    </ligand>
    <ligandPart>
        <name>Fe</name>
        <dbReference type="ChEBI" id="CHEBI:18248"/>
    </ligandPart>
</feature>
<feature type="binding site" description="covalent">
    <location>
        <position position="271"/>
    </location>
    <ligand>
        <name>heme</name>
        <dbReference type="ChEBI" id="CHEBI:30413"/>
        <label>7</label>
    </ligand>
</feature>
<feature type="binding site" description="covalent">
    <location>
        <position position="274"/>
    </location>
    <ligand>
        <name>heme</name>
        <dbReference type="ChEBI" id="CHEBI:30413"/>
        <label>7</label>
    </ligand>
</feature>
<feature type="binding site" description="axial binding residue">
    <location>
        <position position="275"/>
    </location>
    <ligand>
        <name>heme</name>
        <dbReference type="ChEBI" id="CHEBI:30413"/>
        <label>7</label>
    </ligand>
    <ligandPart>
        <name>Fe</name>
        <dbReference type="ChEBI" id="CHEBI:18248"/>
    </ligandPart>
</feature>
<feature type="binding site" description="axial binding residue">
    <location>
        <position position="294"/>
    </location>
    <ligand>
        <name>heme</name>
        <dbReference type="ChEBI" id="CHEBI:30413"/>
        <label>9</label>
    </ligand>
    <ligandPart>
        <name>Fe</name>
        <dbReference type="ChEBI" id="CHEBI:18248"/>
    </ligandPart>
</feature>
<feature type="binding site" description="covalent">
    <location>
        <position position="297"/>
    </location>
    <ligand>
        <name>heme</name>
        <dbReference type="ChEBI" id="CHEBI:30413"/>
        <label>8</label>
    </ligand>
</feature>
<feature type="binding site" description="covalent">
    <location>
        <position position="300"/>
    </location>
    <ligand>
        <name>heme</name>
        <dbReference type="ChEBI" id="CHEBI:30413"/>
        <label>8</label>
    </ligand>
</feature>
<feature type="binding site" description="axial binding residue">
    <location>
        <position position="301"/>
    </location>
    <ligand>
        <name>heme</name>
        <dbReference type="ChEBI" id="CHEBI:30413"/>
        <label>8</label>
    </ligand>
    <ligandPart>
        <name>Fe</name>
        <dbReference type="ChEBI" id="CHEBI:18248"/>
    </ligandPart>
</feature>
<feature type="binding site" description="covalent">
    <location>
        <position position="314"/>
    </location>
    <ligand>
        <name>heme</name>
        <dbReference type="ChEBI" id="CHEBI:30413"/>
        <label>9</label>
    </ligand>
</feature>
<feature type="binding site" description="covalent">
    <location>
        <position position="317"/>
    </location>
    <ligand>
        <name>heme</name>
        <dbReference type="ChEBI" id="CHEBI:30413"/>
        <label>9</label>
    </ligand>
</feature>
<feature type="binding site" description="axial binding residue">
    <location>
        <position position="318"/>
    </location>
    <ligand>
        <name>heme</name>
        <dbReference type="ChEBI" id="CHEBI:30413"/>
        <label>9</label>
    </ligand>
    <ligandPart>
        <name>Fe</name>
        <dbReference type="ChEBI" id="CHEBI:18248"/>
    </ligandPart>
</feature>
<feature type="strand" evidence="1">
    <location>
        <begin position="37"/>
        <end position="40"/>
    </location>
</feature>
<feature type="strand" evidence="1">
    <location>
        <begin position="42"/>
        <end position="46"/>
    </location>
</feature>
<feature type="strand" evidence="1">
    <location>
        <begin position="63"/>
        <end position="66"/>
    </location>
</feature>
<feature type="helix" evidence="1">
    <location>
        <begin position="67"/>
        <end position="73"/>
    </location>
</feature>
<feature type="helix" evidence="1">
    <location>
        <begin position="77"/>
        <end position="80"/>
    </location>
</feature>
<feature type="helix" evidence="1">
    <location>
        <begin position="89"/>
        <end position="91"/>
    </location>
</feature>
<feature type="helix" evidence="1">
    <location>
        <begin position="99"/>
        <end position="101"/>
    </location>
</feature>
<feature type="helix" evidence="1">
    <location>
        <begin position="106"/>
        <end position="111"/>
    </location>
</feature>
<feature type="strand" evidence="1">
    <location>
        <begin position="119"/>
        <end position="121"/>
    </location>
</feature>
<feature type="helix" evidence="1">
    <location>
        <begin position="127"/>
        <end position="137"/>
    </location>
</feature>
<feature type="helix" evidence="1">
    <location>
        <begin position="139"/>
        <end position="142"/>
    </location>
</feature>
<feature type="helix" evidence="1">
    <location>
        <begin position="144"/>
        <end position="147"/>
    </location>
</feature>
<feature type="helix" evidence="1">
    <location>
        <begin position="154"/>
        <end position="160"/>
    </location>
</feature>
<feature type="helix" evidence="1">
    <location>
        <begin position="169"/>
        <end position="177"/>
    </location>
</feature>
<feature type="helix" evidence="1">
    <location>
        <begin position="182"/>
        <end position="194"/>
    </location>
</feature>
<feature type="helix" evidence="1">
    <location>
        <begin position="204"/>
        <end position="206"/>
    </location>
</feature>
<feature type="strand" evidence="1">
    <location>
        <begin position="211"/>
        <end position="213"/>
    </location>
</feature>
<feature type="strand" evidence="1">
    <location>
        <begin position="218"/>
        <end position="220"/>
    </location>
</feature>
<feature type="strand" evidence="1">
    <location>
        <begin position="223"/>
        <end position="225"/>
    </location>
</feature>
<feature type="helix" evidence="1">
    <location>
        <begin position="227"/>
        <end position="236"/>
    </location>
</feature>
<feature type="turn" evidence="1">
    <location>
        <begin position="237"/>
        <end position="240"/>
    </location>
</feature>
<feature type="helix" evidence="1">
    <location>
        <begin position="242"/>
        <end position="247"/>
    </location>
</feature>
<feature type="helix" evidence="1">
    <location>
        <begin position="253"/>
        <end position="257"/>
    </location>
</feature>
<feature type="helix" evidence="1">
    <location>
        <begin position="271"/>
        <end position="273"/>
    </location>
</feature>
<feature type="helix" evidence="1">
    <location>
        <begin position="289"/>
        <end position="303"/>
    </location>
</feature>
<feature type="strand" evidence="1">
    <location>
        <begin position="314"/>
        <end position="318"/>
    </location>
</feature>
<evidence type="ECO:0007829" key="1">
    <source>
        <dbReference type="PDB" id="1OFW"/>
    </source>
</evidence>
<organism>
    <name type="scientific">Desulfovibrio desulfuricans (strain ATCC 27774 / DSM 6949 / MB)</name>
    <dbReference type="NCBI Taxonomy" id="525146"/>
    <lineage>
        <taxon>Bacteria</taxon>
        <taxon>Pseudomonadati</taxon>
        <taxon>Thermodesulfobacteriota</taxon>
        <taxon>Desulfovibrionia</taxon>
        <taxon>Desulfovibrionales</taxon>
        <taxon>Desulfovibrionaceae</taxon>
        <taxon>Desulfovibrio</taxon>
    </lineage>
</organism>
<gene>
    <name type="ordered locus">Ddes_2038</name>
</gene>
<proteinExistence type="evidence at protein level"/>
<dbReference type="EMBL" id="AF186393">
    <property type="protein sequence ID" value="AAD56586.1"/>
    <property type="molecule type" value="Genomic_DNA"/>
</dbReference>
<dbReference type="EMBL" id="CP001358">
    <property type="protein sequence ID" value="ACL49934.1"/>
    <property type="molecule type" value="Genomic_DNA"/>
</dbReference>
<dbReference type="PIR" id="JC7094">
    <property type="entry name" value="JC7094"/>
</dbReference>
<dbReference type="PDB" id="19HC">
    <property type="method" value="X-ray"/>
    <property type="resolution" value="1.80 A"/>
    <property type="chains" value="A/B=31-321"/>
</dbReference>
<dbReference type="PDB" id="1OFW">
    <property type="method" value="X-ray"/>
    <property type="resolution" value="1.50 A"/>
    <property type="chains" value="A/B=31-326"/>
</dbReference>
<dbReference type="PDB" id="1OFY">
    <property type="method" value="X-ray"/>
    <property type="resolution" value="2.00 A"/>
    <property type="chains" value="A/B=31-326"/>
</dbReference>
<dbReference type="PDBsum" id="19HC"/>
<dbReference type="PDBsum" id="1OFW"/>
<dbReference type="PDBsum" id="1OFY"/>
<dbReference type="SMR" id="Q9RN68"/>
<dbReference type="STRING" id="525146.Ddes_2038"/>
<dbReference type="DrugBank" id="DB03317">
    <property type="generic name" value="Ferroheme C"/>
</dbReference>
<dbReference type="KEGG" id="dds:Ddes_2038"/>
<dbReference type="eggNOG" id="COG0484">
    <property type="taxonomic scope" value="Bacteria"/>
</dbReference>
<dbReference type="HOGENOM" id="CLU_851850_0_0_7"/>
<dbReference type="BioCyc" id="MetaCyc:MONOMER-22168"/>
<dbReference type="EvolutionaryTrace" id="Q9RN68"/>
<dbReference type="GO" id="GO:0042597">
    <property type="term" value="C:periplasmic space"/>
    <property type="evidence" value="ECO:0007669"/>
    <property type="project" value="UniProtKB-SubCell"/>
</dbReference>
<dbReference type="GO" id="GO:0009055">
    <property type="term" value="F:electron transfer activity"/>
    <property type="evidence" value="ECO:0007669"/>
    <property type="project" value="InterPro"/>
</dbReference>
<dbReference type="GO" id="GO:0020037">
    <property type="term" value="F:heme binding"/>
    <property type="evidence" value="ECO:0007669"/>
    <property type="project" value="InterPro"/>
</dbReference>
<dbReference type="GO" id="GO:0046872">
    <property type="term" value="F:metal ion binding"/>
    <property type="evidence" value="ECO:0007669"/>
    <property type="project" value="UniProtKB-KW"/>
</dbReference>
<dbReference type="CDD" id="cd08168">
    <property type="entry name" value="Cytochrom_C3"/>
    <property type="match status" value="2"/>
</dbReference>
<dbReference type="Gene3D" id="3.90.10.10">
    <property type="entry name" value="Cytochrome C3"/>
    <property type="match status" value="2"/>
</dbReference>
<dbReference type="InterPro" id="IPR054980">
    <property type="entry name" value="9HemeCytC"/>
</dbReference>
<dbReference type="InterPro" id="IPR002322">
    <property type="entry name" value="Cyt_c_III"/>
</dbReference>
<dbReference type="InterPro" id="IPR020942">
    <property type="entry name" value="Cyt_c_III_dom"/>
</dbReference>
<dbReference type="InterPro" id="IPR036280">
    <property type="entry name" value="Multihaem_cyt_sf"/>
</dbReference>
<dbReference type="NCBIfam" id="NF045784">
    <property type="entry name" value="9HemeCytC"/>
    <property type="match status" value="1"/>
</dbReference>
<dbReference type="Pfam" id="PF02085">
    <property type="entry name" value="Cytochrom_CIII"/>
    <property type="match status" value="2"/>
</dbReference>
<dbReference type="PRINTS" id="PR00609">
    <property type="entry name" value="CYTOCHROMEC3"/>
</dbReference>
<dbReference type="SUPFAM" id="SSF48695">
    <property type="entry name" value="Multiheme cytochromes"/>
    <property type="match status" value="1"/>
</dbReference>
<dbReference type="PROSITE" id="PS51008">
    <property type="entry name" value="MULTIHEME_CYTC"/>
    <property type="match status" value="1"/>
</dbReference>
<comment type="function">
    <text>May form part of a transmembrane redox complex through which electrons are transferred to the cytoplasm for reduction of sulfate.</text>
</comment>
<comment type="subunit">
    <text>Monomer.</text>
</comment>
<comment type="subcellular location">
    <subcellularLocation>
        <location>Periplasm</location>
    </subcellularLocation>
</comment>
<comment type="domain">
    <text>Arranged into two tetraheme clusters and the extra heme 4 is located asymmetrically between the two regions.</text>
</comment>
<comment type="PTM">
    <text>Binds 9 heme groups per subunit.</text>
</comment>
<reference key="1">
    <citation type="journal article" date="1999" name="Biochem. Biophys. Res. Commun.">
        <title>Sequencing the gene encoding Desulfovibrio desulfuricans ATCC 27774 nine-heme cytochrome c.</title>
        <authorList>
            <person name="Saraiva L.M."/>
            <person name="da Costa P.N."/>
            <person name="LeGall J."/>
        </authorList>
    </citation>
    <scope>NUCLEOTIDE SEQUENCE [GENOMIC DNA]</scope>
</reference>
<reference key="2">
    <citation type="journal article" date="1999" name="J. Biol. Inorg. Chem.">
        <title>Nine-haem cytochrome c from Desulfovibrio desulfuricans ATCC 27774: primary sequence determination, crystallographic refinement at 1.8 A and modelling studies of its interaction with the tetrahaem cytochrome c3.</title>
        <authorList>
            <person name="Matias P.M."/>
            <person name="Saraiva L.M."/>
            <person name="Soares C.M."/>
            <person name="Coelho A.V."/>
            <person name="LeGall J."/>
            <person name="Carrondo M.A."/>
        </authorList>
    </citation>
    <scope>NUCLEOTIDE SEQUENCE [GENOMIC DNA]</scope>
    <scope>X-RAY CRYSTALLOGRAPHY (1.8 ANGSTROMS)</scope>
</reference>
<reference key="3">
    <citation type="submission" date="2009-01" db="EMBL/GenBank/DDBJ databases">
        <title>Complete sequence of Desulfovibrio desulfuricans subsp. desulfuricans str. ATCC 27774.</title>
        <authorList>
            <consortium name="US DOE Joint Genome Institute"/>
            <person name="Lucas S."/>
            <person name="Copeland A."/>
            <person name="Lapidus A."/>
            <person name="Glavina del Rio T."/>
            <person name="Tice H."/>
            <person name="Bruce D."/>
            <person name="Goodwin L."/>
            <person name="Pitluck S."/>
            <person name="Sims D."/>
            <person name="Lu M."/>
            <person name="Kiss H."/>
            <person name="Meineke L."/>
            <person name="Brettin T."/>
            <person name="Detter J.C."/>
            <person name="Han C."/>
            <person name="Larimer F."/>
            <person name="Land M."/>
            <person name="Hauser L."/>
            <person name="Kyrpides N."/>
            <person name="Ovchinnikova G."/>
            <person name="Hazen T.C."/>
        </authorList>
    </citation>
    <scope>NUCLEOTIDE SEQUENCE [LARGE SCALE GENOMIC DNA]</scope>
    <source>
        <strain>ATCC 27774 / DSM 6949 / MB</strain>
    </source>
</reference>
<reference key="4">
    <citation type="journal article" date="1999" name="Structure">
        <title>The primary and three-dimensional structures of a nine-haem cytochrome c from Desulfovibrio desulfuricans ATCC 27774 reveal a new member of the Hmc family.</title>
        <authorList>
            <person name="Matias P.M."/>
            <person name="Coelho R."/>
            <person name="Pereira I.A.C."/>
            <person name="Coelho A.V."/>
            <person name="Thompson A.W."/>
            <person name="Sieker L."/>
            <person name="LeGall J."/>
            <person name="Carrondo M.A."/>
        </authorList>
    </citation>
    <scope>X-RAY CRYSTALLOGRAPHY (1.8 ANGSTROMS)</scope>
</reference>
<protein>
    <recommendedName>
        <fullName>Nine-heme cytochrome c</fullName>
    </recommendedName>
    <alternativeName>
        <fullName>9Hcc</fullName>
    </alternativeName>
</protein>
<keyword id="KW-0002">3D-structure</keyword>
<keyword id="KW-0249">Electron transport</keyword>
<keyword id="KW-0349">Heme</keyword>
<keyword id="KW-0408">Iron</keyword>
<keyword id="KW-0479">Metal-binding</keyword>
<keyword id="KW-0574">Periplasm</keyword>
<keyword id="KW-0677">Repeat</keyword>
<keyword id="KW-0732">Signal</keyword>
<keyword id="KW-0813">Transport</keyword>
<accession>Q9RN68</accession>
<accession>B8J3C4</accession>
<name>CYC9_DESDA</name>
<sequence>MRNGTSLLLLAAIALAGAACLTAMGGTAKAAALEPTDSGAPSAIVMFPVGEKPNPKGAAMKPVVFNHLIHEKKIDNCETCHHTGDPVSCSTCHTVEGKAEGNYITLDRAMHATNIAKRAKGNTPVSCVSCHEQQTKERRECAGCHAIVTPKRDEAWCATCHNITPSMTPEQMQKGINGTLLPGDNEALAAETVLAQKTVEPVSPMLAPYKVVIDALADKYEPSNFTHRRHLTSLMERIKDDKLAQAFHNKPEILCATCHHRSPLSLTPPKCGSCHTKEIDKANPGRPNLMAAYHLQCMGCHKGMDVARPRDTDCTTCHKAAPKSAD</sequence>